<feature type="chain" id="PRO_0000367000" description="Beta-galactosidase">
    <location>
        <begin position="1"/>
        <end position="1035"/>
    </location>
</feature>
<feature type="active site" description="Proton donor" evidence="1">
    <location>
        <position position="469"/>
    </location>
</feature>
<feature type="active site" description="Nucleophile" evidence="1">
    <location>
        <position position="545"/>
    </location>
</feature>
<feature type="binding site" evidence="1">
    <location>
        <position position="109"/>
    </location>
    <ligand>
        <name>substrate</name>
    </ligand>
</feature>
<feature type="binding site" evidence="1">
    <location>
        <position position="208"/>
    </location>
    <ligand>
        <name>Na(+)</name>
        <dbReference type="ChEBI" id="CHEBI:29101"/>
    </ligand>
</feature>
<feature type="binding site" evidence="1">
    <location>
        <position position="208"/>
    </location>
    <ligand>
        <name>substrate</name>
    </ligand>
</feature>
<feature type="binding site" evidence="1">
    <location>
        <position position="424"/>
    </location>
    <ligand>
        <name>Mg(2+)</name>
        <dbReference type="ChEBI" id="CHEBI:18420"/>
        <label>1</label>
    </ligand>
</feature>
<feature type="binding site" evidence="1">
    <location>
        <position position="426"/>
    </location>
    <ligand>
        <name>Mg(2+)</name>
        <dbReference type="ChEBI" id="CHEBI:18420"/>
        <label>1</label>
    </ligand>
</feature>
<feature type="binding site" evidence="1">
    <location>
        <position position="469"/>
    </location>
    <ligand>
        <name>Mg(2+)</name>
        <dbReference type="ChEBI" id="CHEBI:18420"/>
        <label>1</label>
    </ligand>
</feature>
<feature type="binding site" evidence="1">
    <location>
        <position position="469"/>
    </location>
    <ligand>
        <name>substrate</name>
    </ligand>
</feature>
<feature type="binding site" evidence="1">
    <location>
        <begin position="545"/>
        <end position="548"/>
    </location>
    <ligand>
        <name>substrate</name>
    </ligand>
</feature>
<feature type="binding site" evidence="1">
    <location>
        <position position="605"/>
    </location>
    <ligand>
        <name>Mg(2+)</name>
        <dbReference type="ChEBI" id="CHEBI:18420"/>
        <label>2</label>
    </ligand>
</feature>
<feature type="binding site" evidence="1">
    <location>
        <position position="609"/>
    </location>
    <ligand>
        <name>Na(+)</name>
        <dbReference type="ChEBI" id="CHEBI:29101"/>
    </ligand>
</feature>
<feature type="binding site" evidence="1">
    <location>
        <position position="612"/>
    </location>
    <ligand>
        <name>Na(+)</name>
        <dbReference type="ChEBI" id="CHEBI:29101"/>
    </ligand>
</feature>
<feature type="binding site" evidence="1">
    <location>
        <position position="612"/>
    </location>
    <ligand>
        <name>substrate</name>
    </ligand>
</feature>
<feature type="binding site" evidence="1">
    <location>
        <position position="1011"/>
    </location>
    <ligand>
        <name>substrate</name>
    </ligand>
</feature>
<feature type="site" description="Transition state stabilizer" evidence="1">
    <location>
        <position position="365"/>
    </location>
</feature>
<feature type="site" description="Transition state stabilizer" evidence="1">
    <location>
        <position position="399"/>
    </location>
</feature>
<protein>
    <recommendedName>
        <fullName evidence="1">Beta-galactosidase</fullName>
        <shortName evidence="1">Beta-gal</shortName>
        <ecNumber evidence="1">3.2.1.23</ecNumber>
    </recommendedName>
    <alternativeName>
        <fullName evidence="1">Lactase</fullName>
    </alternativeName>
</protein>
<evidence type="ECO:0000255" key="1">
    <source>
        <dbReference type="HAMAP-Rule" id="MF_01687"/>
    </source>
</evidence>
<keyword id="KW-0326">Glycosidase</keyword>
<keyword id="KW-0378">Hydrolase</keyword>
<keyword id="KW-0460">Magnesium</keyword>
<keyword id="KW-0479">Metal-binding</keyword>
<keyword id="KW-0915">Sodium</keyword>
<sequence length="1035" mass="117917">MQISDTGHSHMPDFHAVLAREDWQNQTITHLNRLPAHPAFASWRDELAARDNHLSTRRRQLDGEWQFVYARSPFAVDAQWLTQDLPDSRGTPVPSNWQMEGYDAPIYTNVRYPIDTTPPRVPEDNPTGCYSLHFTVEDTWRENGQTQIIFDGVNSAFHLWCNGVWVGYSQDSRLPAAFDLSPFLRPGDNRLCVMVMRWSAGSWLEDQDMWRMSGIFRSVWLLNKPQQRLCDVQLTPALDALYRDGTLQVQATVEATEAALAGLSVGVSLWRGEEQVAAGRQPLGTPAVDERGHYAERVDFALAVTAPAHWSAETPNCYRAVVTLWRGDELLEAEAWDIGFRRIEIADGLLRLNGKPLLIRGVNRHEHHYLRGQVVTEADMVQDILLMKQNNFNAVRCSHYPNAPRWYELCNRYGLYVVDEANIETHGMVPMNRLSDDPAWLPAFSARVTRMVQSNRNHPCIIIWSLGNESGGGGNHEALYHWLKRNDPSRPVQYEGGGADTTATDIICPMYARVERDQPIPAVPKWGIKKWISLPGEQRPLILCEYAHAMGNSLGNFADYWQAFREYPRLQGGFIWDWADQAIRKIFDDGSVGWAYGGDFGDKPNDRQFCMNGLVFPDRTPHPSLVEAKHAQQYFQFTLLSTSPLRVRITSEYLFRPTDNEVVRWQVQSAGETLYHGNLTLALPPEGSDEITLLDSLILPEGARAVWLTLEVTQPRATDWSEADHRVAWQQFPLPAPLALPAPTVPAGAPDLIVSDEVWQIRAGSQCWTIDRRTGLLSRWSVGGQEQLLTPLRDQFIRAPLDNDIGVSEVERIDPNAWVERWKSAGLYDLEAHCVQCDAQRLANETLVDCRWHYLRGEEVVIVSHWRMHFTADGTLRLAVDGERAETLPPLPRVGLHFQVADQQAPVSWLGLGPHENYPDRRSSACFARWEQPLAAMTTPYIFPTENGLRCDTQALDWGRWHVSGHFHFSVQPWSTRQLMETDHWHKMQAEDGVWITLDGLHMGVGGDDSWTPSVLPQWLLSQTRWQYEFFLRCL</sequence>
<name>BGAL_KLEP3</name>
<proteinExistence type="inferred from homology"/>
<reference key="1">
    <citation type="journal article" date="2008" name="PLoS Genet.">
        <title>Complete genome sequence of the N2-fixing broad host range endophyte Klebsiella pneumoniae 342 and virulence predictions verified in mice.</title>
        <authorList>
            <person name="Fouts D.E."/>
            <person name="Tyler H.L."/>
            <person name="DeBoy R.T."/>
            <person name="Daugherty S."/>
            <person name="Ren Q."/>
            <person name="Badger J.H."/>
            <person name="Durkin A.S."/>
            <person name="Huot H."/>
            <person name="Shrivastava S."/>
            <person name="Kothari S."/>
            <person name="Dodson R.J."/>
            <person name="Mohamoud Y."/>
            <person name="Khouri H."/>
            <person name="Roesch L.F.W."/>
            <person name="Krogfelt K.A."/>
            <person name="Struve C."/>
            <person name="Triplett E.W."/>
            <person name="Methe B.A."/>
        </authorList>
    </citation>
    <scope>NUCLEOTIDE SEQUENCE [LARGE SCALE GENOMIC DNA]</scope>
    <source>
        <strain>342</strain>
    </source>
</reference>
<comment type="catalytic activity">
    <reaction evidence="1">
        <text>Hydrolysis of terminal non-reducing beta-D-galactose residues in beta-D-galactosides.</text>
        <dbReference type="EC" id="3.2.1.23"/>
    </reaction>
</comment>
<comment type="cofactor">
    <cofactor evidence="1">
        <name>Mg(2+)</name>
        <dbReference type="ChEBI" id="CHEBI:18420"/>
    </cofactor>
    <text evidence="1">Binds 2 magnesium ions per monomer.</text>
</comment>
<comment type="cofactor">
    <cofactor evidence="1">
        <name>Na(+)</name>
        <dbReference type="ChEBI" id="CHEBI:29101"/>
    </cofactor>
    <text evidence="1">Binds 1 sodium ion per monomer.</text>
</comment>
<comment type="subunit">
    <text evidence="1">Homotetramer.</text>
</comment>
<comment type="similarity">
    <text evidence="1">Belongs to the glycosyl hydrolase 2 family.</text>
</comment>
<dbReference type="EC" id="3.2.1.23" evidence="1"/>
<dbReference type="EMBL" id="CP000964">
    <property type="protein sequence ID" value="ACI08231.1"/>
    <property type="molecule type" value="Genomic_DNA"/>
</dbReference>
<dbReference type="SMR" id="B5XQY2"/>
<dbReference type="CAZy" id="GH2">
    <property type="family name" value="Glycoside Hydrolase Family 2"/>
</dbReference>
<dbReference type="KEGG" id="kpe:KPK_2776"/>
<dbReference type="HOGENOM" id="CLU_002346_0_2_6"/>
<dbReference type="Proteomes" id="UP000001734">
    <property type="component" value="Chromosome"/>
</dbReference>
<dbReference type="GO" id="GO:0009341">
    <property type="term" value="C:beta-galactosidase complex"/>
    <property type="evidence" value="ECO:0007669"/>
    <property type="project" value="InterPro"/>
</dbReference>
<dbReference type="GO" id="GO:0004565">
    <property type="term" value="F:beta-galactosidase activity"/>
    <property type="evidence" value="ECO:0007669"/>
    <property type="project" value="UniProtKB-EC"/>
</dbReference>
<dbReference type="GO" id="GO:0030246">
    <property type="term" value="F:carbohydrate binding"/>
    <property type="evidence" value="ECO:0007669"/>
    <property type="project" value="InterPro"/>
</dbReference>
<dbReference type="GO" id="GO:0000287">
    <property type="term" value="F:magnesium ion binding"/>
    <property type="evidence" value="ECO:0007669"/>
    <property type="project" value="UniProtKB-UniRule"/>
</dbReference>
<dbReference type="GO" id="GO:0005990">
    <property type="term" value="P:lactose catabolic process"/>
    <property type="evidence" value="ECO:0007669"/>
    <property type="project" value="TreeGrafter"/>
</dbReference>
<dbReference type="FunFam" id="3.20.20.80:FF:000018">
    <property type="entry name" value="Beta-galactosidase"/>
    <property type="match status" value="1"/>
</dbReference>
<dbReference type="Gene3D" id="2.70.98.10">
    <property type="match status" value="1"/>
</dbReference>
<dbReference type="Gene3D" id="2.60.120.260">
    <property type="entry name" value="Galactose-binding domain-like"/>
    <property type="match status" value="1"/>
</dbReference>
<dbReference type="Gene3D" id="3.20.20.80">
    <property type="entry name" value="Glycosidases"/>
    <property type="match status" value="1"/>
</dbReference>
<dbReference type="Gene3D" id="2.60.40.10">
    <property type="entry name" value="Immunoglobulins"/>
    <property type="match status" value="2"/>
</dbReference>
<dbReference type="HAMAP" id="MF_01687">
    <property type="entry name" value="Beta_gal"/>
    <property type="match status" value="1"/>
</dbReference>
<dbReference type="InterPro" id="IPR004199">
    <property type="entry name" value="B-gal_small/dom_5"/>
</dbReference>
<dbReference type="InterPro" id="IPR050347">
    <property type="entry name" value="Bact_Beta-galactosidase"/>
</dbReference>
<dbReference type="InterPro" id="IPR036156">
    <property type="entry name" value="Beta-gal/glucu_dom_sf"/>
</dbReference>
<dbReference type="InterPro" id="IPR011013">
    <property type="entry name" value="Gal_mutarotase_sf_dom"/>
</dbReference>
<dbReference type="InterPro" id="IPR008979">
    <property type="entry name" value="Galactose-bd-like_sf"/>
</dbReference>
<dbReference type="InterPro" id="IPR014718">
    <property type="entry name" value="GH-type_carb-bd"/>
</dbReference>
<dbReference type="InterPro" id="IPR006101">
    <property type="entry name" value="Glyco_hydro_2"/>
</dbReference>
<dbReference type="InterPro" id="IPR023232">
    <property type="entry name" value="Glyco_hydro_2_AS"/>
</dbReference>
<dbReference type="InterPro" id="IPR023933">
    <property type="entry name" value="Glyco_hydro_2_beta_Galsidase"/>
</dbReference>
<dbReference type="InterPro" id="IPR006103">
    <property type="entry name" value="Glyco_hydro_2_cat"/>
</dbReference>
<dbReference type="InterPro" id="IPR023230">
    <property type="entry name" value="Glyco_hydro_2_CS"/>
</dbReference>
<dbReference type="InterPro" id="IPR006102">
    <property type="entry name" value="Glyco_hydro_2_Ig-like"/>
</dbReference>
<dbReference type="InterPro" id="IPR006104">
    <property type="entry name" value="Glyco_hydro_2_N"/>
</dbReference>
<dbReference type="InterPro" id="IPR017853">
    <property type="entry name" value="Glycoside_hydrolase_SF"/>
</dbReference>
<dbReference type="InterPro" id="IPR013783">
    <property type="entry name" value="Ig-like_fold"/>
</dbReference>
<dbReference type="InterPro" id="IPR032312">
    <property type="entry name" value="LacZ_4"/>
</dbReference>
<dbReference type="NCBIfam" id="NF007074">
    <property type="entry name" value="PRK09525.1"/>
    <property type="match status" value="1"/>
</dbReference>
<dbReference type="PANTHER" id="PTHR46323">
    <property type="entry name" value="BETA-GALACTOSIDASE"/>
    <property type="match status" value="1"/>
</dbReference>
<dbReference type="PANTHER" id="PTHR46323:SF2">
    <property type="entry name" value="BETA-GALACTOSIDASE"/>
    <property type="match status" value="1"/>
</dbReference>
<dbReference type="Pfam" id="PF02929">
    <property type="entry name" value="Bgal_small_N"/>
    <property type="match status" value="1"/>
</dbReference>
<dbReference type="Pfam" id="PF00703">
    <property type="entry name" value="Glyco_hydro_2"/>
    <property type="match status" value="1"/>
</dbReference>
<dbReference type="Pfam" id="PF02836">
    <property type="entry name" value="Glyco_hydro_2_C"/>
    <property type="match status" value="1"/>
</dbReference>
<dbReference type="Pfam" id="PF02837">
    <property type="entry name" value="Glyco_hydro_2_N"/>
    <property type="match status" value="1"/>
</dbReference>
<dbReference type="Pfam" id="PF16353">
    <property type="entry name" value="LacZ_4"/>
    <property type="match status" value="1"/>
</dbReference>
<dbReference type="PRINTS" id="PR00132">
    <property type="entry name" value="GLHYDRLASE2"/>
</dbReference>
<dbReference type="SMART" id="SM01038">
    <property type="entry name" value="Bgal_small_N"/>
    <property type="match status" value="1"/>
</dbReference>
<dbReference type="SUPFAM" id="SSF51445">
    <property type="entry name" value="(Trans)glycosidases"/>
    <property type="match status" value="1"/>
</dbReference>
<dbReference type="SUPFAM" id="SSF49303">
    <property type="entry name" value="beta-Galactosidase/glucuronidase domain"/>
    <property type="match status" value="2"/>
</dbReference>
<dbReference type="SUPFAM" id="SSF74650">
    <property type="entry name" value="Galactose mutarotase-like"/>
    <property type="match status" value="1"/>
</dbReference>
<dbReference type="SUPFAM" id="SSF49785">
    <property type="entry name" value="Galactose-binding domain-like"/>
    <property type="match status" value="1"/>
</dbReference>
<dbReference type="PROSITE" id="PS00719">
    <property type="entry name" value="GLYCOSYL_HYDROL_F2_1"/>
    <property type="match status" value="1"/>
</dbReference>
<dbReference type="PROSITE" id="PS00608">
    <property type="entry name" value="GLYCOSYL_HYDROL_F2_2"/>
    <property type="match status" value="1"/>
</dbReference>
<organism>
    <name type="scientific">Klebsiella pneumoniae (strain 342)</name>
    <dbReference type="NCBI Taxonomy" id="507522"/>
    <lineage>
        <taxon>Bacteria</taxon>
        <taxon>Pseudomonadati</taxon>
        <taxon>Pseudomonadota</taxon>
        <taxon>Gammaproteobacteria</taxon>
        <taxon>Enterobacterales</taxon>
        <taxon>Enterobacteriaceae</taxon>
        <taxon>Klebsiella/Raoultella group</taxon>
        <taxon>Klebsiella</taxon>
        <taxon>Klebsiella pneumoniae complex</taxon>
    </lineage>
</organism>
<accession>B5XQY2</accession>
<gene>
    <name evidence="1" type="primary">lacZ</name>
    <name type="ordered locus">KPK_2776</name>
</gene>